<name>ATPI_STAPU</name>
<organism>
    <name type="scientific">Staurastrum punctulatum</name>
    <name type="common">Green alga</name>
    <name type="synonym">Cosmoastrum punctulatum</name>
    <dbReference type="NCBI Taxonomy" id="102822"/>
    <lineage>
        <taxon>Eukaryota</taxon>
        <taxon>Viridiplantae</taxon>
        <taxon>Streptophyta</taxon>
        <taxon>Zygnematophyceae</taxon>
        <taxon>Zygnematophycidae</taxon>
        <taxon>Desmidiales</taxon>
        <taxon>Desmidiaceae</taxon>
        <taxon>Staurastrum</taxon>
    </lineage>
</organism>
<keyword id="KW-0066">ATP synthesis</keyword>
<keyword id="KW-0138">CF(0)</keyword>
<keyword id="KW-0150">Chloroplast</keyword>
<keyword id="KW-0375">Hydrogen ion transport</keyword>
<keyword id="KW-0406">Ion transport</keyword>
<keyword id="KW-0472">Membrane</keyword>
<keyword id="KW-0934">Plastid</keyword>
<keyword id="KW-0793">Thylakoid</keyword>
<keyword id="KW-0812">Transmembrane</keyword>
<keyword id="KW-1133">Transmembrane helix</keyword>
<keyword id="KW-0813">Transport</keyword>
<accession>Q32RY0</accession>
<evidence type="ECO:0000255" key="1">
    <source>
        <dbReference type="HAMAP-Rule" id="MF_01393"/>
    </source>
</evidence>
<protein>
    <recommendedName>
        <fullName evidence="1">ATP synthase subunit a, chloroplastic</fullName>
    </recommendedName>
    <alternativeName>
        <fullName evidence="1">ATP synthase F0 sector subunit a</fullName>
    </alternativeName>
    <alternativeName>
        <fullName evidence="1">F-ATPase subunit IV</fullName>
    </alternativeName>
</protein>
<proteinExistence type="inferred from homology"/>
<sequence>MYITEASIDSYSSLYQISAVEVGQHFYWEIGDLRVHGQVLITSWVVIGILLTVAFLGTRKLETVPNATQNFVEYVLQFIRDLARTQIGEEEYRDWVPFVGTLFLFIFVSNWSGALVPWKLIELPHGELAAPTNDINTTVALALLTSGAYFYAGFHKRGLSYFGKYLQPTPVLLPINILEDFTKPLSLSFRLFGNILADELVVAVLVSLVPLVVPIPMMFLGLFTSGIQALIFATLAAAYIGESMEGHH</sequence>
<reference key="1">
    <citation type="journal article" date="2005" name="BMC Biol.">
        <title>The complete chloroplast DNA sequences of the charophycean green algae Staurastrum and Zygnema reveal that the chloroplast genome underwent extensive changes during the evolution of the Zygnematales.</title>
        <authorList>
            <person name="Turmel M."/>
            <person name="Otis C."/>
            <person name="Lemieux C."/>
        </authorList>
    </citation>
    <scope>NUCLEOTIDE SEQUENCE [LARGE SCALE GENOMIC DNA]</scope>
</reference>
<comment type="function">
    <text evidence="1">Key component of the proton channel; it plays a direct role in the translocation of protons across the membrane.</text>
</comment>
<comment type="subunit">
    <text evidence="1">F-type ATPases have 2 components, CF(1) - the catalytic core - and CF(0) - the membrane proton channel. CF(1) has five subunits: alpha(3), beta(3), gamma(1), delta(1), epsilon(1). CF(0) has four main subunits: a, b, b' and c.</text>
</comment>
<comment type="subcellular location">
    <subcellularLocation>
        <location evidence="1">Plastid</location>
        <location evidence="1">Chloroplast thylakoid membrane</location>
        <topology evidence="1">Multi-pass membrane protein</topology>
    </subcellularLocation>
</comment>
<comment type="similarity">
    <text evidence="1">Belongs to the ATPase A chain family.</text>
</comment>
<geneLocation type="chloroplast"/>
<gene>
    <name evidence="1" type="primary">atpI</name>
</gene>
<feature type="chain" id="PRO_0000362601" description="ATP synthase subunit a, chloroplastic">
    <location>
        <begin position="1"/>
        <end position="248"/>
    </location>
</feature>
<feature type="transmembrane region" description="Helical" evidence="1">
    <location>
        <begin position="37"/>
        <end position="57"/>
    </location>
</feature>
<feature type="transmembrane region" description="Helical" evidence="1">
    <location>
        <begin position="96"/>
        <end position="116"/>
    </location>
</feature>
<feature type="transmembrane region" description="Helical" evidence="1">
    <location>
        <begin position="135"/>
        <end position="155"/>
    </location>
</feature>
<feature type="transmembrane region" description="Helical" evidence="1">
    <location>
        <begin position="200"/>
        <end position="220"/>
    </location>
</feature>
<feature type="transmembrane region" description="Helical" evidence="1">
    <location>
        <begin position="221"/>
        <end position="241"/>
    </location>
</feature>
<dbReference type="EMBL" id="AY958085">
    <property type="protein sequence ID" value="AAX45687.1"/>
    <property type="molecule type" value="Genomic_DNA"/>
</dbReference>
<dbReference type="RefSeq" id="YP_636396.1">
    <property type="nucleotide sequence ID" value="NC_008116.1"/>
</dbReference>
<dbReference type="SMR" id="Q32RY0"/>
<dbReference type="GeneID" id="4108646"/>
<dbReference type="GO" id="GO:0009535">
    <property type="term" value="C:chloroplast thylakoid membrane"/>
    <property type="evidence" value="ECO:0007669"/>
    <property type="project" value="UniProtKB-SubCell"/>
</dbReference>
<dbReference type="GO" id="GO:0005886">
    <property type="term" value="C:plasma membrane"/>
    <property type="evidence" value="ECO:0007669"/>
    <property type="project" value="UniProtKB-UniRule"/>
</dbReference>
<dbReference type="GO" id="GO:0045259">
    <property type="term" value="C:proton-transporting ATP synthase complex"/>
    <property type="evidence" value="ECO:0007669"/>
    <property type="project" value="UniProtKB-KW"/>
</dbReference>
<dbReference type="GO" id="GO:0046933">
    <property type="term" value="F:proton-transporting ATP synthase activity, rotational mechanism"/>
    <property type="evidence" value="ECO:0007669"/>
    <property type="project" value="UniProtKB-UniRule"/>
</dbReference>
<dbReference type="CDD" id="cd00310">
    <property type="entry name" value="ATP-synt_Fo_a_6"/>
    <property type="match status" value="1"/>
</dbReference>
<dbReference type="FunFam" id="1.20.120.220:FF:000001">
    <property type="entry name" value="ATP synthase subunit a, chloroplastic"/>
    <property type="match status" value="1"/>
</dbReference>
<dbReference type="Gene3D" id="1.20.120.220">
    <property type="entry name" value="ATP synthase, F0 complex, subunit A"/>
    <property type="match status" value="1"/>
</dbReference>
<dbReference type="HAMAP" id="MF_01393">
    <property type="entry name" value="ATP_synth_a_bact"/>
    <property type="match status" value="1"/>
</dbReference>
<dbReference type="InterPro" id="IPR045082">
    <property type="entry name" value="ATP_syn_F0_a_bact/chloroplast"/>
</dbReference>
<dbReference type="InterPro" id="IPR000568">
    <property type="entry name" value="ATP_synth_F0_asu"/>
</dbReference>
<dbReference type="InterPro" id="IPR023011">
    <property type="entry name" value="ATP_synth_F0_asu_AS"/>
</dbReference>
<dbReference type="InterPro" id="IPR035908">
    <property type="entry name" value="F0_ATP_A_sf"/>
</dbReference>
<dbReference type="NCBIfam" id="TIGR01131">
    <property type="entry name" value="ATP_synt_6_or_A"/>
    <property type="match status" value="1"/>
</dbReference>
<dbReference type="PANTHER" id="PTHR42823">
    <property type="entry name" value="ATP SYNTHASE SUBUNIT A, CHLOROPLASTIC"/>
    <property type="match status" value="1"/>
</dbReference>
<dbReference type="PANTHER" id="PTHR42823:SF3">
    <property type="entry name" value="ATP SYNTHASE SUBUNIT A, CHLOROPLASTIC"/>
    <property type="match status" value="1"/>
</dbReference>
<dbReference type="Pfam" id="PF00119">
    <property type="entry name" value="ATP-synt_A"/>
    <property type="match status" value="1"/>
</dbReference>
<dbReference type="PRINTS" id="PR00123">
    <property type="entry name" value="ATPASEA"/>
</dbReference>
<dbReference type="SUPFAM" id="SSF81336">
    <property type="entry name" value="F1F0 ATP synthase subunit A"/>
    <property type="match status" value="1"/>
</dbReference>
<dbReference type="PROSITE" id="PS00449">
    <property type="entry name" value="ATPASE_A"/>
    <property type="match status" value="1"/>
</dbReference>